<protein>
    <recommendedName>
        <fullName>Tumor necrosis factor</fullName>
    </recommendedName>
    <alternativeName>
        <fullName>Cachectin</fullName>
    </alternativeName>
    <alternativeName>
        <fullName>TNF-alpha</fullName>
    </alternativeName>
    <alternativeName>
        <fullName>Tumor necrosis factor ligand superfamily member 2</fullName>
        <shortName>TNF-a</shortName>
    </alternativeName>
    <component>
        <recommendedName>
            <fullName>Tumor necrosis factor, membrane form</fullName>
        </recommendedName>
        <alternativeName>
            <fullName>N-terminal fragment</fullName>
            <shortName>NTF</shortName>
        </alternativeName>
    </component>
    <component>
        <recommendedName>
            <fullName>Intracellular domain 1</fullName>
            <shortName>ICD1</shortName>
        </recommendedName>
    </component>
    <component>
        <recommendedName>
            <fullName>Intracellular domain 2</fullName>
            <shortName>ICD2</shortName>
        </recommendedName>
    </component>
    <component>
        <recommendedName>
            <fullName>C-domain 1</fullName>
        </recommendedName>
    </component>
    <component>
        <recommendedName>
            <fullName>C-domain 2</fullName>
        </recommendedName>
    </component>
    <component>
        <recommendedName>
            <fullName>Tumor necrosis factor, soluble form</fullName>
        </recommendedName>
    </component>
</protein>
<sequence length="234" mass="25469">MSTESMIRDVELAEEELAKKAGGPQGSRRCLCLSLFSFLLVAGATTLFCLLHFGVIGPQREEQLPNAFQSINPLAQTLRSSSRTPSDKPVAHVVANPQAEGQLQWLSGRANALLANGVKLTDNQLVVPLDGLYLIYSQVLFKGQGCPSTHVLLTHTISRLAVSYPSKVNLLSAIKSPCHTESPEQAEAKPWYEPIYLGGVFQLEKGDQLSAEINQPNYLDFAESGQVYFGIIAL</sequence>
<dbReference type="EMBL" id="M64087">
    <property type="protein sequence ID" value="AAA30959.1"/>
    <property type="molecule type" value="Genomic_DNA"/>
</dbReference>
<dbReference type="EMBL" id="AB035735">
    <property type="protein sequence ID" value="BAA88349.1"/>
    <property type="molecule type" value="mRNA"/>
</dbReference>
<dbReference type="PIR" id="JQ1344">
    <property type="entry name" value="JQ1344"/>
</dbReference>
<dbReference type="RefSeq" id="NP_001075288.2">
    <property type="nucleotide sequence ID" value="NM_001081819.2"/>
</dbReference>
<dbReference type="SMR" id="P29553"/>
<dbReference type="FunCoup" id="P29553">
    <property type="interactions" value="829"/>
</dbReference>
<dbReference type="STRING" id="9796.ENSECAP00000001460"/>
<dbReference type="GlyCosmos" id="P29553">
    <property type="glycosylation" value="1 site, No reported glycans"/>
</dbReference>
<dbReference type="PaxDb" id="9796-ENSECAP00000001460"/>
<dbReference type="GeneID" id="100033834"/>
<dbReference type="KEGG" id="ecb:100033834"/>
<dbReference type="CTD" id="7124"/>
<dbReference type="HOGENOM" id="CLU_070352_3_1_1"/>
<dbReference type="InParanoid" id="P29553"/>
<dbReference type="OrthoDB" id="9940698at2759"/>
<dbReference type="TreeFam" id="TF332169"/>
<dbReference type="Proteomes" id="UP000002281">
    <property type="component" value="Unplaced"/>
</dbReference>
<dbReference type="GO" id="GO:0005615">
    <property type="term" value="C:extracellular space"/>
    <property type="evidence" value="ECO:0000318"/>
    <property type="project" value="GO_Central"/>
</dbReference>
<dbReference type="GO" id="GO:0005886">
    <property type="term" value="C:plasma membrane"/>
    <property type="evidence" value="ECO:0007669"/>
    <property type="project" value="UniProtKB-SubCell"/>
</dbReference>
<dbReference type="GO" id="GO:0005125">
    <property type="term" value="F:cytokine activity"/>
    <property type="evidence" value="ECO:0000318"/>
    <property type="project" value="GO_Central"/>
</dbReference>
<dbReference type="GO" id="GO:0005164">
    <property type="term" value="F:tumor necrosis factor receptor binding"/>
    <property type="evidence" value="ECO:0007669"/>
    <property type="project" value="InterPro"/>
</dbReference>
<dbReference type="GO" id="GO:0008625">
    <property type="term" value="P:extrinsic apoptotic signaling pathway via death domain receptors"/>
    <property type="evidence" value="ECO:0000318"/>
    <property type="project" value="GO_Central"/>
</dbReference>
<dbReference type="GO" id="GO:0006955">
    <property type="term" value="P:immune response"/>
    <property type="evidence" value="ECO:0000318"/>
    <property type="project" value="GO_Central"/>
</dbReference>
<dbReference type="GO" id="GO:0097527">
    <property type="term" value="P:necroptotic signaling pathway"/>
    <property type="evidence" value="ECO:0000250"/>
    <property type="project" value="UniProtKB"/>
</dbReference>
<dbReference type="GO" id="GO:0043242">
    <property type="term" value="P:negative regulation of protein-containing complex disassembly"/>
    <property type="evidence" value="ECO:0000250"/>
    <property type="project" value="UniProtKB"/>
</dbReference>
<dbReference type="GO" id="GO:0043065">
    <property type="term" value="P:positive regulation of apoptotic process"/>
    <property type="evidence" value="ECO:0000250"/>
    <property type="project" value="UniProtKB"/>
</dbReference>
<dbReference type="GO" id="GO:0043123">
    <property type="term" value="P:positive regulation of canonical NF-kappaB signal transduction"/>
    <property type="evidence" value="ECO:0000318"/>
    <property type="project" value="GO_Central"/>
</dbReference>
<dbReference type="GO" id="GO:2001238">
    <property type="term" value="P:positive regulation of extrinsic apoptotic signaling pathway"/>
    <property type="evidence" value="ECO:0000318"/>
    <property type="project" value="GO_Central"/>
</dbReference>
<dbReference type="GO" id="GO:0043507">
    <property type="term" value="P:positive regulation of JUN kinase activity"/>
    <property type="evidence" value="ECO:0000250"/>
    <property type="project" value="UniProtKB"/>
</dbReference>
<dbReference type="GO" id="GO:0043406">
    <property type="term" value="P:positive regulation of MAP kinase activity"/>
    <property type="evidence" value="ECO:0000250"/>
    <property type="project" value="UniProtKB"/>
</dbReference>
<dbReference type="GO" id="GO:0051092">
    <property type="term" value="P:positive regulation of NF-kappaB transcription factor activity"/>
    <property type="evidence" value="ECO:0000250"/>
    <property type="project" value="UniProtKB"/>
</dbReference>
<dbReference type="GO" id="GO:0001934">
    <property type="term" value="P:positive regulation of protein phosphorylation"/>
    <property type="evidence" value="ECO:0000250"/>
    <property type="project" value="UniProtKB"/>
</dbReference>
<dbReference type="GO" id="GO:0043243">
    <property type="term" value="P:positive regulation of protein-containing complex disassembly"/>
    <property type="evidence" value="ECO:0000250"/>
    <property type="project" value="UniProtKB"/>
</dbReference>
<dbReference type="GO" id="GO:0065008">
    <property type="term" value="P:regulation of biological quality"/>
    <property type="evidence" value="ECO:0007669"/>
    <property type="project" value="UniProtKB-ARBA"/>
</dbReference>
<dbReference type="GO" id="GO:0050793">
    <property type="term" value="P:regulation of developmental process"/>
    <property type="evidence" value="ECO:0007669"/>
    <property type="project" value="UniProtKB-ARBA"/>
</dbReference>
<dbReference type="GO" id="GO:0051239">
    <property type="term" value="P:regulation of multicellular organismal process"/>
    <property type="evidence" value="ECO:0007669"/>
    <property type="project" value="UniProtKB-ARBA"/>
</dbReference>
<dbReference type="GO" id="GO:0051046">
    <property type="term" value="P:regulation of secretion"/>
    <property type="evidence" value="ECO:0007669"/>
    <property type="project" value="UniProtKB-ARBA"/>
</dbReference>
<dbReference type="GO" id="GO:0033209">
    <property type="term" value="P:tumor necrosis factor-mediated signaling pathway"/>
    <property type="evidence" value="ECO:0000318"/>
    <property type="project" value="GO_Central"/>
</dbReference>
<dbReference type="GO" id="GO:0010573">
    <property type="term" value="P:vascular endothelial growth factor production"/>
    <property type="evidence" value="ECO:0000250"/>
    <property type="project" value="UniProtKB"/>
</dbReference>
<dbReference type="CDD" id="cd00184">
    <property type="entry name" value="TNF"/>
    <property type="match status" value="1"/>
</dbReference>
<dbReference type="FunFam" id="2.60.120.40:FF:000007">
    <property type="entry name" value="Tumor necrosis factor"/>
    <property type="match status" value="1"/>
</dbReference>
<dbReference type="Gene3D" id="2.60.120.40">
    <property type="match status" value="1"/>
</dbReference>
<dbReference type="InterPro" id="IPR006053">
    <property type="entry name" value="TNF"/>
</dbReference>
<dbReference type="InterPro" id="IPR002959">
    <property type="entry name" value="TNF_alpha"/>
</dbReference>
<dbReference type="InterPro" id="IPR021184">
    <property type="entry name" value="TNF_CS"/>
</dbReference>
<dbReference type="InterPro" id="IPR006052">
    <property type="entry name" value="TNF_dom"/>
</dbReference>
<dbReference type="InterPro" id="IPR008983">
    <property type="entry name" value="Tumour_necrosis_fac-like_dom"/>
</dbReference>
<dbReference type="PANTHER" id="PTHR11471:SF23">
    <property type="entry name" value="TUMOR NECROSIS FACTOR"/>
    <property type="match status" value="1"/>
</dbReference>
<dbReference type="PANTHER" id="PTHR11471">
    <property type="entry name" value="TUMOR NECROSIS FACTOR FAMILY MEMBER"/>
    <property type="match status" value="1"/>
</dbReference>
<dbReference type="Pfam" id="PF00229">
    <property type="entry name" value="TNF"/>
    <property type="match status" value="1"/>
</dbReference>
<dbReference type="PRINTS" id="PR01234">
    <property type="entry name" value="TNECROSISFCT"/>
</dbReference>
<dbReference type="PRINTS" id="PR01235">
    <property type="entry name" value="TNFALPHA"/>
</dbReference>
<dbReference type="SMART" id="SM00207">
    <property type="entry name" value="TNF"/>
    <property type="match status" value="1"/>
</dbReference>
<dbReference type="SUPFAM" id="SSF49842">
    <property type="entry name" value="TNF-like"/>
    <property type="match status" value="1"/>
</dbReference>
<dbReference type="PROSITE" id="PS00251">
    <property type="entry name" value="THD_1"/>
    <property type="match status" value="1"/>
</dbReference>
<dbReference type="PROSITE" id="PS50049">
    <property type="entry name" value="THD_2"/>
    <property type="match status" value="1"/>
</dbReference>
<proteinExistence type="evidence at transcript level"/>
<evidence type="ECO:0000250" key="1"/>
<evidence type="ECO:0000250" key="2">
    <source>
        <dbReference type="UniProtKB" id="P01375"/>
    </source>
</evidence>
<evidence type="ECO:0000250" key="3">
    <source>
        <dbReference type="UniProtKB" id="P06804"/>
    </source>
</evidence>
<evidence type="ECO:0000255" key="4"/>
<evidence type="ECO:0000255" key="5">
    <source>
        <dbReference type="PROSITE-ProRule" id="PRU01387"/>
    </source>
</evidence>
<evidence type="ECO:0000305" key="6"/>
<accession>P29553</accession>
<accession>Q9TTJ3</accession>
<feature type="chain" id="PRO_0000034421" description="Tumor necrosis factor, membrane form">
    <location>
        <begin position="1"/>
        <end position="234"/>
    </location>
</feature>
<feature type="chain" id="PRO_0000417227" description="Intracellular domain 1" evidence="1">
    <location>
        <begin position="1"/>
        <end position="39"/>
    </location>
</feature>
<feature type="chain" id="PRO_0000417228" description="Intracellular domain 2" evidence="1">
    <location>
        <begin position="1"/>
        <end position="35"/>
    </location>
</feature>
<feature type="chain" id="PRO_0000417229" description="C-domain 1" evidence="1">
    <location>
        <begin position="50"/>
        <end status="unknown"/>
    </location>
</feature>
<feature type="chain" id="PRO_0000417230" description="C-domain 2" evidence="1">
    <location>
        <begin position="52"/>
        <end status="unknown"/>
    </location>
</feature>
<feature type="chain" id="PRO_0000034422" description="Tumor necrosis factor, soluble form">
    <location>
        <begin position="78"/>
        <end position="234"/>
    </location>
</feature>
<feature type="topological domain" description="Cytoplasmic" evidence="4">
    <location>
        <begin position="1"/>
        <end position="35"/>
    </location>
</feature>
<feature type="transmembrane region" description="Helical; Signal-anchor for type II membrane protein" evidence="4">
    <location>
        <begin position="36"/>
        <end position="56"/>
    </location>
</feature>
<feature type="topological domain" description="Extracellular" evidence="4">
    <location>
        <begin position="57"/>
        <end position="234"/>
    </location>
</feature>
<feature type="domain" description="THD" evidence="5">
    <location>
        <begin position="89"/>
        <end position="234"/>
    </location>
</feature>
<feature type="site" description="Cleavage; by SPPL2A or SPPL2B" evidence="1">
    <location>
        <begin position="34"/>
        <end position="35"/>
    </location>
</feature>
<feature type="site" description="Cleavage; by SPPL2A or SPPL2B" evidence="1">
    <location>
        <begin position="39"/>
        <end position="40"/>
    </location>
</feature>
<feature type="site" description="Cleavage; by SPPL2A or SPPL2B" evidence="1">
    <location>
        <begin position="49"/>
        <end position="50"/>
    </location>
</feature>
<feature type="site" description="Cleavage; by SPPL2A or SPPL2B" evidence="1">
    <location>
        <begin position="51"/>
        <end position="52"/>
    </location>
</feature>
<feature type="site" description="Cleavage; by ADAM17" evidence="1">
    <location>
        <begin position="77"/>
        <end position="78"/>
    </location>
</feature>
<feature type="modified residue" description="Phosphoserine; by CK1" evidence="1">
    <location>
        <position position="2"/>
    </location>
</feature>
<feature type="lipid moiety-binding region" description="N6-myristoyl lysine" evidence="2">
    <location>
        <position position="19"/>
    </location>
</feature>
<feature type="lipid moiety-binding region" description="N6-myristoyl lysine" evidence="2">
    <location>
        <position position="20"/>
    </location>
</feature>
<feature type="glycosylation site" description="O-linked (GalNAc...) serine; in soluble form" evidence="1">
    <location>
        <position position="81"/>
    </location>
</feature>
<feature type="disulfide bond" evidence="5">
    <location>
        <begin position="146"/>
        <end position="178"/>
    </location>
</feature>
<feature type="sequence conflict" description="In Ref. 2; BAA88349." evidence="6" ref="2">
    <original>PCH</original>
    <variation>LAN</variation>
    <location>
        <begin position="177"/>
        <end position="179"/>
    </location>
</feature>
<comment type="function">
    <text evidence="2 3">Cytokine that binds to TNFRSF1A/TNFR1 and TNFRSF1B/TNFBR. It is mainly secreted by macrophages and can induce cell death of certain tumor cell lines. It is potent pyrogen causing fever by direct action or by stimulation of interleukin-1 secretion and is implicated in the induction of cachexia, Under certain conditions it can stimulate cell proliferation and induce cell differentiation (By similarity). Induces insulin resistance in adipocytes via inhibition of insulin-induced IRS1 tyrosine phosphorylation and insulin-induced glucose uptake. Induces GKAP42 protein degradation in adipocytes which is partially responsible for TNF-induced insulin resistance (By similarity). Plays a role in angiogenesis by inducing VEGF production synergistically with IL1B and IL6 (By similarity). Promotes osteoclastogenesis and therefore mediates bone resorption (By similarity).</text>
</comment>
<comment type="function">
    <text evidence="2">The TNF intracellular domain (ICD) form induces IL12 production in dendritic cells.</text>
</comment>
<comment type="subunit">
    <text evidence="1">Homotrimer. Interacts with SPPL2B (By similarity).</text>
</comment>
<comment type="subcellular location">
    <subcellularLocation>
        <location evidence="1">Cell membrane</location>
        <topology evidence="1">Single-pass type II membrane protein</topology>
    </subcellularLocation>
</comment>
<comment type="subcellular location">
    <molecule>Tumor necrosis factor, membrane form</molecule>
    <subcellularLocation>
        <location evidence="1">Membrane</location>
        <topology evidence="1">Single-pass type II membrane protein</topology>
    </subcellularLocation>
</comment>
<comment type="subcellular location">
    <molecule>Tumor necrosis factor, soluble form</molecule>
    <subcellularLocation>
        <location evidence="1">Secreted</location>
    </subcellularLocation>
</comment>
<comment type="subcellular location">
    <molecule>C-domain 1</molecule>
    <subcellularLocation>
        <location evidence="1">Secreted</location>
    </subcellularLocation>
</comment>
<comment type="subcellular location">
    <molecule>C-domain 2</molecule>
    <subcellularLocation>
        <location evidence="1">Secreted</location>
    </subcellularLocation>
</comment>
<comment type="PTM">
    <text evidence="1">The soluble form derives from the membrane form by proteolytic processing. The membrane-bound form is further proteolytically processed by SPPL2A or SPPL2B through regulated intramembrane proteolysis producing TNF intracellular domains (ICD1 and ICD2) released in the cytosol and TNF C-domain 1 and C-domain 2 secreted into the extracellular space (By similarity).</text>
</comment>
<comment type="PTM">
    <text evidence="1">The membrane form, but not the soluble form, is phosphorylated on serine residues. Dephosphorylation of the membrane form occurs by binding to soluble TNFRSF1A/TNFR1 (By similarity).</text>
</comment>
<comment type="PTM">
    <text evidence="1">O-glycosylated; glycans contain galactose, N-acetylgalactosamine and N-acetylneuraminic acid.</text>
</comment>
<comment type="PTM">
    <molecule>Tumor necrosis factor, soluble form</molecule>
    <text evidence="2">The soluble form is demyristoylated by SIRT6, promoting its secretion.</text>
</comment>
<comment type="similarity">
    <text evidence="6">Belongs to the tumor necrosis factor family.</text>
</comment>
<reference key="1">
    <citation type="journal article" date="1991" name="Gene">
        <title>Cloning and characterization of gene TNF alpha encoding equine tumor necrosis factor alpha.</title>
        <authorList>
            <person name="Su X."/>
            <person name="Morris D.D."/>
            <person name="McGraw R.A."/>
        </authorList>
    </citation>
    <scope>NUCLEOTIDE SEQUENCE [GENOMIC DNA]</scope>
</reference>
<reference key="2">
    <citation type="submission" date="1999-12" db="EMBL/GenBank/DDBJ databases">
        <title>Molecular cloning of equine tumor necrosis factor-alpha mRNA.</title>
        <authorList>
            <person name="Ishida N."/>
            <person name="Sato F."/>
            <person name="Hasegawa T."/>
        </authorList>
    </citation>
    <scope>NUCLEOTIDE SEQUENCE</scope>
    <source>
        <strain>Thoroughbred</strain>
        <tissue>Artery</tissue>
    </source>
</reference>
<gene>
    <name type="primary">TNF</name>
    <name type="synonym">TNFA</name>
    <name type="synonym">TNFSF2</name>
</gene>
<organism>
    <name type="scientific">Equus caballus</name>
    <name type="common">Horse</name>
    <dbReference type="NCBI Taxonomy" id="9796"/>
    <lineage>
        <taxon>Eukaryota</taxon>
        <taxon>Metazoa</taxon>
        <taxon>Chordata</taxon>
        <taxon>Craniata</taxon>
        <taxon>Vertebrata</taxon>
        <taxon>Euteleostomi</taxon>
        <taxon>Mammalia</taxon>
        <taxon>Eutheria</taxon>
        <taxon>Laurasiatheria</taxon>
        <taxon>Perissodactyla</taxon>
        <taxon>Equidae</taxon>
        <taxon>Equus</taxon>
    </lineage>
</organism>
<keyword id="KW-1003">Cell membrane</keyword>
<keyword id="KW-0202">Cytokine</keyword>
<keyword id="KW-1015">Disulfide bond</keyword>
<keyword id="KW-0325">Glycoprotein</keyword>
<keyword id="KW-0449">Lipoprotein</keyword>
<keyword id="KW-0472">Membrane</keyword>
<keyword id="KW-0519">Myristate</keyword>
<keyword id="KW-0597">Phosphoprotein</keyword>
<keyword id="KW-1185">Reference proteome</keyword>
<keyword id="KW-0964">Secreted</keyword>
<keyword id="KW-0735">Signal-anchor</keyword>
<keyword id="KW-0812">Transmembrane</keyword>
<keyword id="KW-1133">Transmembrane helix</keyword>
<name>TNFA_HORSE</name>